<reference key="1">
    <citation type="journal article" date="2003" name="Proc. Natl. Acad. Sci. U.S.A.">
        <title>Complete genome sequence of the marine planctomycete Pirellula sp. strain 1.</title>
        <authorList>
            <person name="Gloeckner F.O."/>
            <person name="Kube M."/>
            <person name="Bauer M."/>
            <person name="Teeling H."/>
            <person name="Lombardot T."/>
            <person name="Ludwig W."/>
            <person name="Gade D."/>
            <person name="Beck A."/>
            <person name="Borzym K."/>
            <person name="Heitmann K."/>
            <person name="Rabus R."/>
            <person name="Schlesner H."/>
            <person name="Amann R."/>
            <person name="Reinhardt R."/>
        </authorList>
    </citation>
    <scope>NUCLEOTIDE SEQUENCE [LARGE SCALE GENOMIC DNA]</scope>
    <source>
        <strain>DSM 10527 / NCIMB 13988 / SH1</strain>
    </source>
</reference>
<dbReference type="EC" id="2.3.1.180" evidence="1"/>
<dbReference type="EMBL" id="BX294143">
    <property type="protein sequence ID" value="CAD74700.1"/>
    <property type="molecule type" value="Genomic_DNA"/>
</dbReference>
<dbReference type="RefSeq" id="NP_867155.2">
    <property type="nucleotide sequence ID" value="NC_005027.1"/>
</dbReference>
<dbReference type="SMR" id="P59814"/>
<dbReference type="FunCoup" id="P59814">
    <property type="interactions" value="482"/>
</dbReference>
<dbReference type="STRING" id="243090.RB6272"/>
<dbReference type="EnsemblBacteria" id="CAD74700">
    <property type="protein sequence ID" value="CAD74700"/>
    <property type="gene ID" value="RB6272"/>
</dbReference>
<dbReference type="KEGG" id="rba:RB6272"/>
<dbReference type="PATRIC" id="fig|243090.15.peg.3023"/>
<dbReference type="eggNOG" id="COG0332">
    <property type="taxonomic scope" value="Bacteria"/>
</dbReference>
<dbReference type="HOGENOM" id="CLU_039592_3_1_0"/>
<dbReference type="InParanoid" id="P59814"/>
<dbReference type="OrthoDB" id="9815506at2"/>
<dbReference type="UniPathway" id="UPA00094"/>
<dbReference type="Proteomes" id="UP000001025">
    <property type="component" value="Chromosome"/>
</dbReference>
<dbReference type="GO" id="GO:0005737">
    <property type="term" value="C:cytoplasm"/>
    <property type="evidence" value="ECO:0007669"/>
    <property type="project" value="UniProtKB-SubCell"/>
</dbReference>
<dbReference type="GO" id="GO:0004315">
    <property type="term" value="F:3-oxoacyl-[acyl-carrier-protein] synthase activity"/>
    <property type="evidence" value="ECO:0007669"/>
    <property type="project" value="InterPro"/>
</dbReference>
<dbReference type="GO" id="GO:0033818">
    <property type="term" value="F:beta-ketoacyl-acyl-carrier-protein synthase III activity"/>
    <property type="evidence" value="ECO:0007669"/>
    <property type="project" value="UniProtKB-UniRule"/>
</dbReference>
<dbReference type="GO" id="GO:0006633">
    <property type="term" value="P:fatty acid biosynthetic process"/>
    <property type="evidence" value="ECO:0007669"/>
    <property type="project" value="UniProtKB-UniRule"/>
</dbReference>
<dbReference type="CDD" id="cd00830">
    <property type="entry name" value="KAS_III"/>
    <property type="match status" value="1"/>
</dbReference>
<dbReference type="Gene3D" id="3.40.47.10">
    <property type="match status" value="1"/>
</dbReference>
<dbReference type="HAMAP" id="MF_01815">
    <property type="entry name" value="FabH"/>
    <property type="match status" value="1"/>
</dbReference>
<dbReference type="InterPro" id="IPR013747">
    <property type="entry name" value="ACP_syn_III_C"/>
</dbReference>
<dbReference type="InterPro" id="IPR013751">
    <property type="entry name" value="ACP_syn_III_N"/>
</dbReference>
<dbReference type="InterPro" id="IPR004655">
    <property type="entry name" value="FabH"/>
</dbReference>
<dbReference type="InterPro" id="IPR016039">
    <property type="entry name" value="Thiolase-like"/>
</dbReference>
<dbReference type="NCBIfam" id="TIGR00747">
    <property type="entry name" value="fabH"/>
    <property type="match status" value="1"/>
</dbReference>
<dbReference type="NCBIfam" id="NF006829">
    <property type="entry name" value="PRK09352.1"/>
    <property type="match status" value="1"/>
</dbReference>
<dbReference type="PANTHER" id="PTHR43091">
    <property type="entry name" value="3-OXOACYL-[ACYL-CARRIER-PROTEIN] SYNTHASE"/>
    <property type="match status" value="1"/>
</dbReference>
<dbReference type="PANTHER" id="PTHR43091:SF1">
    <property type="entry name" value="BETA-KETOACYL-[ACYL-CARRIER-PROTEIN] SYNTHASE III, CHLOROPLASTIC"/>
    <property type="match status" value="1"/>
</dbReference>
<dbReference type="Pfam" id="PF08545">
    <property type="entry name" value="ACP_syn_III"/>
    <property type="match status" value="1"/>
</dbReference>
<dbReference type="Pfam" id="PF08541">
    <property type="entry name" value="ACP_syn_III_C"/>
    <property type="match status" value="1"/>
</dbReference>
<dbReference type="SUPFAM" id="SSF53901">
    <property type="entry name" value="Thiolase-like"/>
    <property type="match status" value="1"/>
</dbReference>
<protein>
    <recommendedName>
        <fullName evidence="1">Beta-ketoacyl-[acyl-carrier-protein] synthase III</fullName>
        <shortName evidence="1">Beta-ketoacyl-ACP synthase III</shortName>
        <shortName evidence="1">KAS III</shortName>
        <ecNumber evidence="1">2.3.1.180</ecNumber>
    </recommendedName>
    <alternativeName>
        <fullName evidence="1">3-oxoacyl-[acyl-carrier-protein] synthase 3</fullName>
    </alternativeName>
    <alternativeName>
        <fullName evidence="1">3-oxoacyl-[acyl-carrier-protein] synthase III</fullName>
    </alternativeName>
</protein>
<gene>
    <name evidence="1" type="primary">fabH</name>
    <name type="ordered locus">RB6272</name>
</gene>
<keyword id="KW-0012">Acyltransferase</keyword>
<keyword id="KW-0963">Cytoplasm</keyword>
<keyword id="KW-0275">Fatty acid biosynthesis</keyword>
<keyword id="KW-0276">Fatty acid metabolism</keyword>
<keyword id="KW-0444">Lipid biosynthesis</keyword>
<keyword id="KW-0443">Lipid metabolism</keyword>
<keyword id="KW-0511">Multifunctional enzyme</keyword>
<keyword id="KW-1185">Reference proteome</keyword>
<keyword id="KW-0808">Transferase</keyword>
<name>FABH_RHOBA</name>
<accession>P59814</accession>
<proteinExistence type="inferred from homology"/>
<organism>
    <name type="scientific">Rhodopirellula baltica (strain DSM 10527 / NCIMB 13988 / SH1)</name>
    <dbReference type="NCBI Taxonomy" id="243090"/>
    <lineage>
        <taxon>Bacteria</taxon>
        <taxon>Pseudomonadati</taxon>
        <taxon>Planctomycetota</taxon>
        <taxon>Planctomycetia</taxon>
        <taxon>Pirellulales</taxon>
        <taxon>Pirellulaceae</taxon>
        <taxon>Rhodopirellula</taxon>
    </lineage>
</organism>
<comment type="function">
    <text evidence="1">Catalyzes the condensation reaction of fatty acid synthesis by the addition to an acyl acceptor of two carbons from malonyl-ACP. Catalyzes the first condensation reaction which initiates fatty acid synthesis and may therefore play a role in governing the total rate of fatty acid production. Possesses both acetoacetyl-ACP synthase and acetyl transacylase activities. Its substrate specificity determines the biosynthesis of branched-chain and/or straight-chain of fatty acids.</text>
</comment>
<comment type="catalytic activity">
    <reaction evidence="1">
        <text>malonyl-[ACP] + acetyl-CoA + H(+) = 3-oxobutanoyl-[ACP] + CO2 + CoA</text>
        <dbReference type="Rhea" id="RHEA:12080"/>
        <dbReference type="Rhea" id="RHEA-COMP:9623"/>
        <dbReference type="Rhea" id="RHEA-COMP:9625"/>
        <dbReference type="ChEBI" id="CHEBI:15378"/>
        <dbReference type="ChEBI" id="CHEBI:16526"/>
        <dbReference type="ChEBI" id="CHEBI:57287"/>
        <dbReference type="ChEBI" id="CHEBI:57288"/>
        <dbReference type="ChEBI" id="CHEBI:78449"/>
        <dbReference type="ChEBI" id="CHEBI:78450"/>
        <dbReference type="EC" id="2.3.1.180"/>
    </reaction>
</comment>
<comment type="pathway">
    <text evidence="1">Lipid metabolism; fatty acid biosynthesis.</text>
</comment>
<comment type="subunit">
    <text evidence="1">Homodimer.</text>
</comment>
<comment type="subcellular location">
    <subcellularLocation>
        <location evidence="1">Cytoplasm</location>
    </subcellularLocation>
</comment>
<comment type="domain">
    <text evidence="1">The last Arg residue of the ACP-binding site is essential for the weak association between ACP/AcpP and FabH.</text>
</comment>
<comment type="similarity">
    <text evidence="1">Belongs to the thiolase-like superfamily. FabH family.</text>
</comment>
<evidence type="ECO:0000255" key="1">
    <source>
        <dbReference type="HAMAP-Rule" id="MF_01815"/>
    </source>
</evidence>
<feature type="chain" id="PRO_0000110459" description="Beta-ketoacyl-[acyl-carrier-protein] synthase III">
    <location>
        <begin position="1"/>
        <end position="345"/>
    </location>
</feature>
<feature type="region of interest" description="ACP-binding" evidence="1">
    <location>
        <begin position="273"/>
        <end position="277"/>
    </location>
</feature>
<feature type="active site" evidence="1">
    <location>
        <position position="114"/>
    </location>
</feature>
<feature type="active site" evidence="1">
    <location>
        <position position="272"/>
    </location>
</feature>
<feature type="active site" evidence="1">
    <location>
        <position position="302"/>
    </location>
</feature>
<sequence>MGNLKGVRIAGTGSYVPERIVTNEDLAALGCDSDWIVRRTGILQRRHAEPGQATSDLCYEAALRCLENANVSVDEIDLILVATITPDHPTPSTACHLQRRLGAVAPAMDIGAACAGFMYALVTGAQFVSNGNARNVLVIGADLMSRTVDPEDKKTYPLFGDAAGAALLVPSTQDECQSTECNGSAADSTIQTDGLLAYQLGSEGCGGEMLCIPAGGSRTPITTDGEDSASRYLQMDGRGVFKWAVRVFDESAKDVLRAANVSSDQLSLVVLHQANQRIIDSAVSDLNVPPEKVFVNLDKYGNTSGASIPLALDEAARAGRLKEGDLVLLCGFGAGLAWGTALFRW</sequence>